<organism>
    <name type="scientific">Baumannia cicadellinicola subsp. Homalodisca coagulata</name>
    <dbReference type="NCBI Taxonomy" id="374463"/>
    <lineage>
        <taxon>Bacteria</taxon>
        <taxon>Pseudomonadati</taxon>
        <taxon>Pseudomonadota</taxon>
        <taxon>Gammaproteobacteria</taxon>
        <taxon>Candidatus Palibaumannia</taxon>
    </lineage>
</organism>
<evidence type="ECO:0000255" key="1">
    <source>
        <dbReference type="HAMAP-Rule" id="MF_00044"/>
    </source>
</evidence>
<feature type="chain" id="PRO_1000006639" description="Aspartate--tRNA ligase">
    <location>
        <begin position="1"/>
        <end position="589"/>
    </location>
</feature>
<feature type="region of interest" description="Aspartate" evidence="1">
    <location>
        <begin position="195"/>
        <end position="198"/>
    </location>
</feature>
<feature type="binding site" evidence="1">
    <location>
        <position position="171"/>
    </location>
    <ligand>
        <name>L-aspartate</name>
        <dbReference type="ChEBI" id="CHEBI:29991"/>
    </ligand>
</feature>
<feature type="binding site" evidence="1">
    <location>
        <begin position="217"/>
        <end position="219"/>
    </location>
    <ligand>
        <name>ATP</name>
        <dbReference type="ChEBI" id="CHEBI:30616"/>
    </ligand>
</feature>
<feature type="binding site" evidence="1">
    <location>
        <position position="217"/>
    </location>
    <ligand>
        <name>L-aspartate</name>
        <dbReference type="ChEBI" id="CHEBI:29991"/>
    </ligand>
</feature>
<feature type="binding site" evidence="1">
    <location>
        <position position="226"/>
    </location>
    <ligand>
        <name>ATP</name>
        <dbReference type="ChEBI" id="CHEBI:30616"/>
    </ligand>
</feature>
<feature type="binding site" evidence="1">
    <location>
        <position position="448"/>
    </location>
    <ligand>
        <name>L-aspartate</name>
        <dbReference type="ChEBI" id="CHEBI:29991"/>
    </ligand>
</feature>
<feature type="binding site" evidence="1">
    <location>
        <position position="482"/>
    </location>
    <ligand>
        <name>ATP</name>
        <dbReference type="ChEBI" id="CHEBI:30616"/>
    </ligand>
</feature>
<feature type="binding site" evidence="1">
    <location>
        <position position="489"/>
    </location>
    <ligand>
        <name>L-aspartate</name>
        <dbReference type="ChEBI" id="CHEBI:29991"/>
    </ligand>
</feature>
<feature type="binding site" evidence="1">
    <location>
        <begin position="534"/>
        <end position="537"/>
    </location>
    <ligand>
        <name>ATP</name>
        <dbReference type="ChEBI" id="CHEBI:30616"/>
    </ligand>
</feature>
<reference key="1">
    <citation type="journal article" date="2006" name="PLoS Biol.">
        <title>Metabolic complementarity and genomics of the dual bacterial symbiosis of sharpshooters.</title>
        <authorList>
            <person name="Wu D."/>
            <person name="Daugherty S.C."/>
            <person name="Van Aken S.E."/>
            <person name="Pai G.H."/>
            <person name="Watkins K.L."/>
            <person name="Khouri H."/>
            <person name="Tallon L.J."/>
            <person name="Zaborsky J.M."/>
            <person name="Dunbar H.E."/>
            <person name="Tran P.L."/>
            <person name="Moran N.A."/>
            <person name="Eisen J.A."/>
        </authorList>
    </citation>
    <scope>NUCLEOTIDE SEQUENCE [LARGE SCALE GENOMIC DNA]</scope>
</reference>
<keyword id="KW-0030">Aminoacyl-tRNA synthetase</keyword>
<keyword id="KW-0067">ATP-binding</keyword>
<keyword id="KW-0963">Cytoplasm</keyword>
<keyword id="KW-0436">Ligase</keyword>
<keyword id="KW-0547">Nucleotide-binding</keyword>
<keyword id="KW-0648">Protein biosynthesis</keyword>
<keyword id="KW-1185">Reference proteome</keyword>
<protein>
    <recommendedName>
        <fullName evidence="1">Aspartate--tRNA ligase</fullName>
        <ecNumber evidence="1">6.1.1.12</ecNumber>
    </recommendedName>
    <alternativeName>
        <fullName evidence="1">Aspartyl-tRNA synthetase</fullName>
        <shortName evidence="1">AspRS</shortName>
    </alternativeName>
</protein>
<comment type="function">
    <text evidence="1">Catalyzes the attachment of L-aspartate to tRNA(Asp) in a two-step reaction: L-aspartate is first activated by ATP to form Asp-AMP and then transferred to the acceptor end of tRNA(Asp).</text>
</comment>
<comment type="catalytic activity">
    <reaction evidence="1">
        <text>tRNA(Asp) + L-aspartate + ATP = L-aspartyl-tRNA(Asp) + AMP + diphosphate</text>
        <dbReference type="Rhea" id="RHEA:19649"/>
        <dbReference type="Rhea" id="RHEA-COMP:9660"/>
        <dbReference type="Rhea" id="RHEA-COMP:9678"/>
        <dbReference type="ChEBI" id="CHEBI:29991"/>
        <dbReference type="ChEBI" id="CHEBI:30616"/>
        <dbReference type="ChEBI" id="CHEBI:33019"/>
        <dbReference type="ChEBI" id="CHEBI:78442"/>
        <dbReference type="ChEBI" id="CHEBI:78516"/>
        <dbReference type="ChEBI" id="CHEBI:456215"/>
        <dbReference type="EC" id="6.1.1.12"/>
    </reaction>
</comment>
<comment type="subunit">
    <text evidence="1">Homodimer.</text>
</comment>
<comment type="subcellular location">
    <subcellularLocation>
        <location evidence="1">Cytoplasm</location>
    </subcellularLocation>
</comment>
<comment type="similarity">
    <text evidence="1">Belongs to the class-II aminoacyl-tRNA synthetase family. Type 1 subfamily.</text>
</comment>
<proteinExistence type="inferred from homology"/>
<dbReference type="EC" id="6.1.1.12" evidence="1"/>
<dbReference type="EMBL" id="CP000238">
    <property type="protein sequence ID" value="ABF14266.1"/>
    <property type="molecule type" value="Genomic_DNA"/>
</dbReference>
<dbReference type="RefSeq" id="WP_011520497.1">
    <property type="nucleotide sequence ID" value="NC_007984.1"/>
</dbReference>
<dbReference type="SMR" id="Q1LTF0"/>
<dbReference type="STRING" id="374463.BCI_0315"/>
<dbReference type="KEGG" id="bci:BCI_0315"/>
<dbReference type="HOGENOM" id="CLU_014330_3_2_6"/>
<dbReference type="OrthoDB" id="9802326at2"/>
<dbReference type="Proteomes" id="UP000002427">
    <property type="component" value="Chromosome"/>
</dbReference>
<dbReference type="GO" id="GO:0005737">
    <property type="term" value="C:cytoplasm"/>
    <property type="evidence" value="ECO:0007669"/>
    <property type="project" value="UniProtKB-SubCell"/>
</dbReference>
<dbReference type="GO" id="GO:0004815">
    <property type="term" value="F:aspartate-tRNA ligase activity"/>
    <property type="evidence" value="ECO:0007669"/>
    <property type="project" value="UniProtKB-UniRule"/>
</dbReference>
<dbReference type="GO" id="GO:0005524">
    <property type="term" value="F:ATP binding"/>
    <property type="evidence" value="ECO:0007669"/>
    <property type="project" value="UniProtKB-UniRule"/>
</dbReference>
<dbReference type="GO" id="GO:0003676">
    <property type="term" value="F:nucleic acid binding"/>
    <property type="evidence" value="ECO:0007669"/>
    <property type="project" value="InterPro"/>
</dbReference>
<dbReference type="GO" id="GO:0006422">
    <property type="term" value="P:aspartyl-tRNA aminoacylation"/>
    <property type="evidence" value="ECO:0007669"/>
    <property type="project" value="UniProtKB-UniRule"/>
</dbReference>
<dbReference type="CDD" id="cd00777">
    <property type="entry name" value="AspRS_core"/>
    <property type="match status" value="1"/>
</dbReference>
<dbReference type="CDD" id="cd04317">
    <property type="entry name" value="EcAspRS_like_N"/>
    <property type="match status" value="1"/>
</dbReference>
<dbReference type="Gene3D" id="3.30.930.10">
    <property type="entry name" value="Bira Bifunctional Protein, Domain 2"/>
    <property type="match status" value="1"/>
</dbReference>
<dbReference type="Gene3D" id="3.30.1360.30">
    <property type="entry name" value="GAD-like domain"/>
    <property type="match status" value="1"/>
</dbReference>
<dbReference type="Gene3D" id="2.40.50.140">
    <property type="entry name" value="Nucleic acid-binding proteins"/>
    <property type="match status" value="1"/>
</dbReference>
<dbReference type="HAMAP" id="MF_00044">
    <property type="entry name" value="Asp_tRNA_synth_type1"/>
    <property type="match status" value="1"/>
</dbReference>
<dbReference type="InterPro" id="IPR004364">
    <property type="entry name" value="Aa-tRNA-synt_II"/>
</dbReference>
<dbReference type="InterPro" id="IPR006195">
    <property type="entry name" value="aa-tRNA-synth_II"/>
</dbReference>
<dbReference type="InterPro" id="IPR045864">
    <property type="entry name" value="aa-tRNA-synth_II/BPL/LPL"/>
</dbReference>
<dbReference type="InterPro" id="IPR004524">
    <property type="entry name" value="Asp-tRNA-ligase_1"/>
</dbReference>
<dbReference type="InterPro" id="IPR047089">
    <property type="entry name" value="Asp-tRNA-ligase_1_N"/>
</dbReference>
<dbReference type="InterPro" id="IPR002312">
    <property type="entry name" value="Asp/Asn-tRNA-synth_IIb"/>
</dbReference>
<dbReference type="InterPro" id="IPR047090">
    <property type="entry name" value="AspRS_core"/>
</dbReference>
<dbReference type="InterPro" id="IPR004115">
    <property type="entry name" value="GAD-like_sf"/>
</dbReference>
<dbReference type="InterPro" id="IPR029351">
    <property type="entry name" value="GAD_dom"/>
</dbReference>
<dbReference type="InterPro" id="IPR012340">
    <property type="entry name" value="NA-bd_OB-fold"/>
</dbReference>
<dbReference type="InterPro" id="IPR004365">
    <property type="entry name" value="NA-bd_OB_tRNA"/>
</dbReference>
<dbReference type="NCBIfam" id="TIGR00459">
    <property type="entry name" value="aspS_bact"/>
    <property type="match status" value="1"/>
</dbReference>
<dbReference type="NCBIfam" id="NF001750">
    <property type="entry name" value="PRK00476.1"/>
    <property type="match status" value="1"/>
</dbReference>
<dbReference type="PANTHER" id="PTHR22594:SF5">
    <property type="entry name" value="ASPARTATE--TRNA LIGASE, MITOCHONDRIAL"/>
    <property type="match status" value="1"/>
</dbReference>
<dbReference type="PANTHER" id="PTHR22594">
    <property type="entry name" value="ASPARTYL/LYSYL-TRNA SYNTHETASE"/>
    <property type="match status" value="1"/>
</dbReference>
<dbReference type="Pfam" id="PF02938">
    <property type="entry name" value="GAD"/>
    <property type="match status" value="1"/>
</dbReference>
<dbReference type="Pfam" id="PF00152">
    <property type="entry name" value="tRNA-synt_2"/>
    <property type="match status" value="1"/>
</dbReference>
<dbReference type="Pfam" id="PF01336">
    <property type="entry name" value="tRNA_anti-codon"/>
    <property type="match status" value="1"/>
</dbReference>
<dbReference type="PRINTS" id="PR01042">
    <property type="entry name" value="TRNASYNTHASP"/>
</dbReference>
<dbReference type="SUPFAM" id="SSF55681">
    <property type="entry name" value="Class II aaRS and biotin synthetases"/>
    <property type="match status" value="1"/>
</dbReference>
<dbReference type="SUPFAM" id="SSF55261">
    <property type="entry name" value="GAD domain-like"/>
    <property type="match status" value="1"/>
</dbReference>
<dbReference type="SUPFAM" id="SSF50249">
    <property type="entry name" value="Nucleic acid-binding proteins"/>
    <property type="match status" value="1"/>
</dbReference>
<dbReference type="PROSITE" id="PS50862">
    <property type="entry name" value="AA_TRNA_LIGASE_II"/>
    <property type="match status" value="1"/>
</dbReference>
<name>SYD_BAUCH</name>
<sequence length="589" mass="67501">MRTIYCGQLNKSHLGQEVILCGWVYRYRNLGRLIFIELSDREGRVQVVFDLTHPSIFSNAAKLRNDFCIQLHGIVRTRLDKQINYNITTGEIEVLATNLTILNSSQPLPLDINFHNNEEQRLKFRYLDLRNPEMAQRLKLRAKITSLVRHFMEKKGFLDIETPMLTKTTPEGARDYLVPSRVHKGQFYALPQSPQLFKQLLMISGFDRYYQIVKCFRDEDLRADRQPEFTQIDVEASFINAEQICKIMEDLVRHLWREIQEVELENFQYMSYTAAMYRFGSDKPDLRNPIEIVDVVDLVKNTTCTILADIAKDIKNRVVALRVPNGAKLSLNDIKKYEKYIQTYGIKFIIWMKVYQGKDGVKTTQSSITKYLLPEDIMSIIERTGACDGDILFFAAGNNNIINNVMGALRIKLGCDLKLNRENSWAPLWIVDFPMFEKDDEGNLHAVHHPFTAPKNIDIPTLLQYPLKAKANAYDMVINGYEVGSGSVRIHCAELQQTIFSILGMTRNEQSSKFGFFIDALKYGAPPHAGFAFGLDRLVMLLTSTENIRDVIAFPKTTTAIDLMTEAPSIGNTIALKELSIEILDKNKI</sequence>
<accession>Q1LTF0</accession>
<gene>
    <name evidence="1" type="primary">aspS</name>
    <name type="ordered locus">BCI_0315</name>
</gene>